<proteinExistence type="inferred from homology"/>
<feature type="chain" id="PRO_0000382257" description="Glutamate-1-semialdehyde 2,1-aminomutase 1">
    <location>
        <begin position="1"/>
        <end position="429"/>
    </location>
</feature>
<feature type="modified residue" description="N6-(pyridoxal phosphate)lysine" evidence="1">
    <location>
        <position position="267"/>
    </location>
</feature>
<reference key="1">
    <citation type="journal article" date="2007" name="Nat. Biotechnol.">
        <title>Comparative analysis of the complete genome sequence of the plant growth-promoting bacterium Bacillus amyloliquefaciens FZB42.</title>
        <authorList>
            <person name="Chen X.H."/>
            <person name="Koumoutsi A."/>
            <person name="Scholz R."/>
            <person name="Eisenreich A."/>
            <person name="Schneider K."/>
            <person name="Heinemeyer I."/>
            <person name="Morgenstern B."/>
            <person name="Voss B."/>
            <person name="Hess W.R."/>
            <person name="Reva O."/>
            <person name="Junge H."/>
            <person name="Voigt B."/>
            <person name="Jungblut P.R."/>
            <person name="Vater J."/>
            <person name="Suessmuth R."/>
            <person name="Liesegang H."/>
            <person name="Strittmatter A."/>
            <person name="Gottschalk G."/>
            <person name="Borriss R."/>
        </authorList>
    </citation>
    <scope>NUCLEOTIDE SEQUENCE [LARGE SCALE GENOMIC DNA]</scope>
    <source>
        <strain>DSM 23117 / BGSC 10A6 / LMG 26770 / FZB42</strain>
    </source>
</reference>
<organism>
    <name type="scientific">Bacillus velezensis (strain DSM 23117 / BGSC 10A6 / LMG 26770 / FZB42)</name>
    <name type="common">Bacillus amyloliquefaciens subsp. plantarum</name>
    <dbReference type="NCBI Taxonomy" id="326423"/>
    <lineage>
        <taxon>Bacteria</taxon>
        <taxon>Bacillati</taxon>
        <taxon>Bacillota</taxon>
        <taxon>Bacilli</taxon>
        <taxon>Bacillales</taxon>
        <taxon>Bacillaceae</taxon>
        <taxon>Bacillus</taxon>
        <taxon>Bacillus amyloliquefaciens group</taxon>
    </lineage>
</organism>
<sequence>MYTKSVELHKEALEHIVGGVNSPSRSYKAVGGGSPVAMEKANGAYFWDVDGNQYIDYLAAYGPIITGHAHPHITEAIKTAAENGVLYGTPTKHEVTFAKMLKEAIPSLDKVRFVNSGTEAVMTTIRVARAYTGRTKIIKFAGCYHGHSDLVLVAAGSGPSTLGTPDSAGVPKSIANEVITVPFNDIESYKAALDKWGSEIAAVLVEPIVGNFGIVEPEEGFLEQVNELTHKAGALVIYDEVITAFRFMYGGAQDLLQVKPDLTALGKIIGGGLPIGAYGGKKEIMEQVAPLGPAYQAGTMAGNPASILSGIACLEVLKEEGVYERLDELGARLEQGILAHAETHGITITVNRLKGALTVYFTDEKIVNYEQAENTDGEAFAKFFKLMLERGINLAPSKYEAWFITTAHTEEDIDATLQAVEDAFRHMKK</sequence>
<protein>
    <recommendedName>
        <fullName evidence="1">Glutamate-1-semialdehyde 2,1-aminomutase 1</fullName>
        <shortName evidence="1">GSA 1</shortName>
        <ecNumber evidence="1">5.4.3.8</ecNumber>
    </recommendedName>
    <alternativeName>
        <fullName evidence="1">Glutamate-1-semialdehyde aminotransferase 1</fullName>
        <shortName evidence="1">GSA-AT 1</shortName>
    </alternativeName>
</protein>
<dbReference type="EC" id="5.4.3.8" evidence="1"/>
<dbReference type="EMBL" id="CP000560">
    <property type="protein sequence ID" value="ABS73264.1"/>
    <property type="molecule type" value="Genomic_DNA"/>
</dbReference>
<dbReference type="RefSeq" id="WP_007408567.1">
    <property type="nucleotide sequence ID" value="NC_009725.2"/>
</dbReference>
<dbReference type="SMR" id="A7Z2N8"/>
<dbReference type="GeneID" id="93080013"/>
<dbReference type="KEGG" id="bay:RBAM_008800"/>
<dbReference type="HOGENOM" id="CLU_016922_1_5_9"/>
<dbReference type="UniPathway" id="UPA00251">
    <property type="reaction ID" value="UER00317"/>
</dbReference>
<dbReference type="Proteomes" id="UP000001120">
    <property type="component" value="Chromosome"/>
</dbReference>
<dbReference type="GO" id="GO:0005737">
    <property type="term" value="C:cytoplasm"/>
    <property type="evidence" value="ECO:0007669"/>
    <property type="project" value="UniProtKB-SubCell"/>
</dbReference>
<dbReference type="GO" id="GO:0042286">
    <property type="term" value="F:glutamate-1-semialdehyde 2,1-aminomutase activity"/>
    <property type="evidence" value="ECO:0007669"/>
    <property type="project" value="UniProtKB-UniRule"/>
</dbReference>
<dbReference type="GO" id="GO:0030170">
    <property type="term" value="F:pyridoxal phosphate binding"/>
    <property type="evidence" value="ECO:0007669"/>
    <property type="project" value="InterPro"/>
</dbReference>
<dbReference type="GO" id="GO:0008483">
    <property type="term" value="F:transaminase activity"/>
    <property type="evidence" value="ECO:0007669"/>
    <property type="project" value="InterPro"/>
</dbReference>
<dbReference type="GO" id="GO:0006782">
    <property type="term" value="P:protoporphyrinogen IX biosynthetic process"/>
    <property type="evidence" value="ECO:0007669"/>
    <property type="project" value="UniProtKB-UniRule"/>
</dbReference>
<dbReference type="CDD" id="cd00610">
    <property type="entry name" value="OAT_like"/>
    <property type="match status" value="1"/>
</dbReference>
<dbReference type="FunFam" id="3.40.640.10:FF:000021">
    <property type="entry name" value="Glutamate-1-semialdehyde 2,1-aminomutase"/>
    <property type="match status" value="1"/>
</dbReference>
<dbReference type="Gene3D" id="3.90.1150.10">
    <property type="entry name" value="Aspartate Aminotransferase, domain 1"/>
    <property type="match status" value="1"/>
</dbReference>
<dbReference type="Gene3D" id="3.40.640.10">
    <property type="entry name" value="Type I PLP-dependent aspartate aminotransferase-like (Major domain)"/>
    <property type="match status" value="1"/>
</dbReference>
<dbReference type="HAMAP" id="MF_00375">
    <property type="entry name" value="HemL_aminotrans_3"/>
    <property type="match status" value="1"/>
</dbReference>
<dbReference type="InterPro" id="IPR004639">
    <property type="entry name" value="4pyrrol_synth_GluAld_NH2Trfase"/>
</dbReference>
<dbReference type="InterPro" id="IPR005814">
    <property type="entry name" value="Aminotrans_3"/>
</dbReference>
<dbReference type="InterPro" id="IPR049704">
    <property type="entry name" value="Aminotrans_3_PPA_site"/>
</dbReference>
<dbReference type="InterPro" id="IPR015424">
    <property type="entry name" value="PyrdxlP-dep_Trfase"/>
</dbReference>
<dbReference type="InterPro" id="IPR015421">
    <property type="entry name" value="PyrdxlP-dep_Trfase_major"/>
</dbReference>
<dbReference type="InterPro" id="IPR015422">
    <property type="entry name" value="PyrdxlP-dep_Trfase_small"/>
</dbReference>
<dbReference type="NCBIfam" id="TIGR00713">
    <property type="entry name" value="hemL"/>
    <property type="match status" value="1"/>
</dbReference>
<dbReference type="NCBIfam" id="NF000818">
    <property type="entry name" value="PRK00062.1"/>
    <property type="match status" value="1"/>
</dbReference>
<dbReference type="NCBIfam" id="NF009055">
    <property type="entry name" value="PRK12389.1"/>
    <property type="match status" value="1"/>
</dbReference>
<dbReference type="PANTHER" id="PTHR43713">
    <property type="entry name" value="GLUTAMATE-1-SEMIALDEHYDE 2,1-AMINOMUTASE"/>
    <property type="match status" value="1"/>
</dbReference>
<dbReference type="PANTHER" id="PTHR43713:SF1">
    <property type="entry name" value="GLUTAMATE-1-SEMIALDEHYDE 2,1-AMINOMUTASE 2"/>
    <property type="match status" value="1"/>
</dbReference>
<dbReference type="Pfam" id="PF00202">
    <property type="entry name" value="Aminotran_3"/>
    <property type="match status" value="1"/>
</dbReference>
<dbReference type="SUPFAM" id="SSF53383">
    <property type="entry name" value="PLP-dependent transferases"/>
    <property type="match status" value="1"/>
</dbReference>
<dbReference type="PROSITE" id="PS00600">
    <property type="entry name" value="AA_TRANSFER_CLASS_3"/>
    <property type="match status" value="1"/>
</dbReference>
<accession>A7Z2N8</accession>
<keyword id="KW-0963">Cytoplasm</keyword>
<keyword id="KW-0413">Isomerase</keyword>
<keyword id="KW-0627">Porphyrin biosynthesis</keyword>
<keyword id="KW-0663">Pyridoxal phosphate</keyword>
<evidence type="ECO:0000255" key="1">
    <source>
        <dbReference type="HAMAP-Rule" id="MF_00375"/>
    </source>
</evidence>
<gene>
    <name evidence="1" type="primary">hemL1</name>
    <name type="ordered locus">RBAM_008800</name>
</gene>
<comment type="catalytic activity">
    <reaction evidence="1">
        <text>(S)-4-amino-5-oxopentanoate = 5-aminolevulinate</text>
        <dbReference type="Rhea" id="RHEA:14265"/>
        <dbReference type="ChEBI" id="CHEBI:57501"/>
        <dbReference type="ChEBI" id="CHEBI:356416"/>
        <dbReference type="EC" id="5.4.3.8"/>
    </reaction>
</comment>
<comment type="cofactor">
    <cofactor evidence="1">
        <name>pyridoxal 5'-phosphate</name>
        <dbReference type="ChEBI" id="CHEBI:597326"/>
    </cofactor>
</comment>
<comment type="pathway">
    <text evidence="1">Porphyrin-containing compound metabolism; protoporphyrin-IX biosynthesis; 5-aminolevulinate from L-glutamyl-tRNA(Glu): step 2/2.</text>
</comment>
<comment type="subunit">
    <text evidence="1">Homodimer.</text>
</comment>
<comment type="subcellular location">
    <subcellularLocation>
        <location evidence="1">Cytoplasm</location>
    </subcellularLocation>
</comment>
<comment type="similarity">
    <text evidence="1">Belongs to the class-III pyridoxal-phosphate-dependent aminotransferase family. HemL subfamily.</text>
</comment>
<name>GSA1_BACVZ</name>